<name>GLNA1_METMA</name>
<keyword id="KW-0002">3D-structure</keyword>
<keyword id="KW-0067">ATP-binding</keyword>
<keyword id="KW-0963">Cytoplasm</keyword>
<keyword id="KW-0436">Ligase</keyword>
<keyword id="KW-0460">Magnesium</keyword>
<keyword id="KW-0479">Metal-binding</keyword>
<keyword id="KW-0547">Nucleotide-binding</keyword>
<accession>Q8PY99</accession>
<proteinExistence type="evidence at protein level"/>
<evidence type="ECO:0000250" key="1">
    <source>
        <dbReference type="UniProtKB" id="P0A1P6"/>
    </source>
</evidence>
<evidence type="ECO:0000250" key="2">
    <source>
        <dbReference type="UniProtKB" id="P12425"/>
    </source>
</evidence>
<evidence type="ECO:0000250" key="3">
    <source>
        <dbReference type="UniProtKB" id="P77961"/>
    </source>
</evidence>
<evidence type="ECO:0000250" key="4">
    <source>
        <dbReference type="UniProtKB" id="P9WN39"/>
    </source>
</evidence>
<evidence type="ECO:0000255" key="5">
    <source>
        <dbReference type="PROSITE-ProRule" id="PRU01330"/>
    </source>
</evidence>
<evidence type="ECO:0000255" key="6">
    <source>
        <dbReference type="PROSITE-ProRule" id="PRU01331"/>
    </source>
</evidence>
<evidence type="ECO:0000269" key="7">
    <source>
    </source>
</evidence>
<evidence type="ECO:0000303" key="8">
    <source>
    </source>
</evidence>
<evidence type="ECO:0000305" key="9"/>
<evidence type="ECO:0000312" key="10">
    <source>
        <dbReference type="EMBL" id="AAM30660.1"/>
    </source>
</evidence>
<dbReference type="EC" id="6.3.1.2" evidence="7"/>
<dbReference type="EMBL" id="AE008384">
    <property type="protein sequence ID" value="AAM30660.1"/>
    <property type="molecule type" value="Genomic_DNA"/>
</dbReference>
<dbReference type="PDB" id="8S59">
    <property type="method" value="EM"/>
    <property type="resolution" value="2.39 A"/>
    <property type="chains" value="A/B/C/D/L/M/O/P/Q/V/X/Y=2-447"/>
</dbReference>
<dbReference type="PDB" id="8TFB">
    <property type="method" value="EM"/>
    <property type="resolution" value="2.99 A"/>
    <property type="chains" value="A/B/C/D/L/M/O/P/Q/V/X/Y=1-447"/>
</dbReference>
<dbReference type="PDB" id="8TFC">
    <property type="method" value="EM"/>
    <property type="resolution" value="6.90 A"/>
    <property type="chains" value="A/B/D/L/O/P/Q/V=1-447"/>
</dbReference>
<dbReference type="PDB" id="8TFK">
    <property type="method" value="EM"/>
    <property type="resolution" value="2.66 A"/>
    <property type="chains" value="A/B/C/D/E/F/G/H/I/J/K/L=1-447"/>
</dbReference>
<dbReference type="PDB" id="8TGE">
    <property type="method" value="X-ray"/>
    <property type="resolution" value="2.30 A"/>
    <property type="chains" value="A/B/D/M/P/Y=1-447"/>
</dbReference>
<dbReference type="PDB" id="8UFJ">
    <property type="method" value="X-ray"/>
    <property type="resolution" value="2.45 A"/>
    <property type="chains" value="A/B/C=1-447"/>
</dbReference>
<dbReference type="PDBsum" id="8S59"/>
<dbReference type="PDBsum" id="8TFB"/>
<dbReference type="PDBsum" id="8TFC"/>
<dbReference type="PDBsum" id="8TFK"/>
<dbReference type="PDBsum" id="8TGE"/>
<dbReference type="PDBsum" id="8UFJ"/>
<dbReference type="EMDB" id="EMD-19730"/>
<dbReference type="EMDB" id="EMD-41228"/>
<dbReference type="EMDB" id="EMD-41229"/>
<dbReference type="EMDB" id="EMD-41232"/>
<dbReference type="SMR" id="Q8PY99"/>
<dbReference type="KEGG" id="mma:MM_0964"/>
<dbReference type="PATRIC" id="fig|192952.21.peg.1140"/>
<dbReference type="eggNOG" id="arCOG01909">
    <property type="taxonomic scope" value="Archaea"/>
</dbReference>
<dbReference type="HOGENOM" id="CLU_017290_1_3_2"/>
<dbReference type="BRENDA" id="6.3.1.2">
    <property type="organism ID" value="3270"/>
</dbReference>
<dbReference type="Proteomes" id="UP000000595">
    <property type="component" value="Chromosome"/>
</dbReference>
<dbReference type="GO" id="GO:0005737">
    <property type="term" value="C:cytoplasm"/>
    <property type="evidence" value="ECO:0007669"/>
    <property type="project" value="UniProtKB-SubCell"/>
</dbReference>
<dbReference type="GO" id="GO:0005524">
    <property type="term" value="F:ATP binding"/>
    <property type="evidence" value="ECO:0007669"/>
    <property type="project" value="UniProtKB-KW"/>
</dbReference>
<dbReference type="GO" id="GO:0004356">
    <property type="term" value="F:glutamine synthetase activity"/>
    <property type="evidence" value="ECO:0007669"/>
    <property type="project" value="UniProtKB-EC"/>
</dbReference>
<dbReference type="GO" id="GO:0046872">
    <property type="term" value="F:metal ion binding"/>
    <property type="evidence" value="ECO:0007669"/>
    <property type="project" value="UniProtKB-KW"/>
</dbReference>
<dbReference type="GO" id="GO:0006542">
    <property type="term" value="P:glutamine biosynthetic process"/>
    <property type="evidence" value="ECO:0007669"/>
    <property type="project" value="InterPro"/>
</dbReference>
<dbReference type="FunFam" id="3.10.20.70:FF:000005">
    <property type="entry name" value="Glutamine synthetase"/>
    <property type="match status" value="1"/>
</dbReference>
<dbReference type="FunFam" id="3.30.590.10:FF:000003">
    <property type="entry name" value="Glutamine synthetase 2"/>
    <property type="match status" value="1"/>
</dbReference>
<dbReference type="Gene3D" id="3.10.20.70">
    <property type="entry name" value="Glutamine synthetase, N-terminal domain"/>
    <property type="match status" value="1"/>
</dbReference>
<dbReference type="Gene3D" id="3.30.590.10">
    <property type="entry name" value="Glutamine synthetase/guanido kinase, catalytic domain"/>
    <property type="match status" value="1"/>
</dbReference>
<dbReference type="InterPro" id="IPR008147">
    <property type="entry name" value="Gln_synt_N"/>
</dbReference>
<dbReference type="InterPro" id="IPR036651">
    <property type="entry name" value="Gln_synt_N_sf"/>
</dbReference>
<dbReference type="InterPro" id="IPR014746">
    <property type="entry name" value="Gln_synth/guanido_kin_cat_dom"/>
</dbReference>
<dbReference type="InterPro" id="IPR008146">
    <property type="entry name" value="Gln_synth_cat_dom"/>
</dbReference>
<dbReference type="InterPro" id="IPR027303">
    <property type="entry name" value="Gln_synth_gly_rich_site"/>
</dbReference>
<dbReference type="InterPro" id="IPR004809">
    <property type="entry name" value="Gln_synth_I"/>
</dbReference>
<dbReference type="InterPro" id="IPR027302">
    <property type="entry name" value="Gln_synth_N_conserv_site"/>
</dbReference>
<dbReference type="NCBIfam" id="TIGR00653">
    <property type="entry name" value="GlnA"/>
    <property type="match status" value="1"/>
</dbReference>
<dbReference type="PANTHER" id="PTHR43785">
    <property type="entry name" value="GAMMA-GLUTAMYLPUTRESCINE SYNTHETASE"/>
    <property type="match status" value="1"/>
</dbReference>
<dbReference type="PANTHER" id="PTHR43785:SF12">
    <property type="entry name" value="TYPE-1 GLUTAMINE SYNTHETASE 2"/>
    <property type="match status" value="1"/>
</dbReference>
<dbReference type="Pfam" id="PF00120">
    <property type="entry name" value="Gln-synt_C"/>
    <property type="match status" value="1"/>
</dbReference>
<dbReference type="Pfam" id="PF03951">
    <property type="entry name" value="Gln-synt_N"/>
    <property type="match status" value="1"/>
</dbReference>
<dbReference type="SMART" id="SM01230">
    <property type="entry name" value="Gln-synt_C"/>
    <property type="match status" value="1"/>
</dbReference>
<dbReference type="SUPFAM" id="SSF54368">
    <property type="entry name" value="Glutamine synthetase, N-terminal domain"/>
    <property type="match status" value="1"/>
</dbReference>
<dbReference type="SUPFAM" id="SSF55931">
    <property type="entry name" value="Glutamine synthetase/guanido kinase"/>
    <property type="match status" value="1"/>
</dbReference>
<dbReference type="PROSITE" id="PS00180">
    <property type="entry name" value="GLNA_1"/>
    <property type="match status" value="1"/>
</dbReference>
<dbReference type="PROSITE" id="PS00181">
    <property type="entry name" value="GLNA_ATP"/>
    <property type="match status" value="1"/>
</dbReference>
<dbReference type="PROSITE" id="PS51986">
    <property type="entry name" value="GS_BETA_GRASP"/>
    <property type="match status" value="1"/>
</dbReference>
<dbReference type="PROSITE" id="PS51987">
    <property type="entry name" value="GS_CATALYTIC"/>
    <property type="match status" value="1"/>
</dbReference>
<organism>
    <name type="scientific">Methanosarcina mazei (strain ATCC BAA-159 / DSM 3647 / Goe1 / Go1 / JCM 11833 / OCM 88)</name>
    <name type="common">Methanosarcina frisia</name>
    <dbReference type="NCBI Taxonomy" id="192952"/>
    <lineage>
        <taxon>Archaea</taxon>
        <taxon>Methanobacteriati</taxon>
        <taxon>Methanobacteriota</taxon>
        <taxon>Stenosarchaea group</taxon>
        <taxon>Methanomicrobia</taxon>
        <taxon>Methanosarcinales</taxon>
        <taxon>Methanosarcinaceae</taxon>
        <taxon>Methanosarcina</taxon>
    </lineage>
</organism>
<gene>
    <name evidence="8" type="primary">glnA1</name>
    <name evidence="10" type="ordered locus">MM_0964</name>
</gene>
<reference key="1">
    <citation type="journal article" date="2002" name="J. Mol. Microbiol. Biotechnol.">
        <title>The genome of Methanosarcina mazei: evidence for lateral gene transfer between Bacteria and Archaea.</title>
        <authorList>
            <person name="Deppenmeier U."/>
            <person name="Johann A."/>
            <person name="Hartsch T."/>
            <person name="Merkl R."/>
            <person name="Schmitz R.A."/>
            <person name="Martinez-Arias R."/>
            <person name="Henne A."/>
            <person name="Wiezer A."/>
            <person name="Baeumer S."/>
            <person name="Jacobi C."/>
            <person name="Brueggemann H."/>
            <person name="Lienard T."/>
            <person name="Christmann A."/>
            <person name="Boemecke M."/>
            <person name="Steckel S."/>
            <person name="Bhattacharyya A."/>
            <person name="Lykidis A."/>
            <person name="Overbeek R."/>
            <person name="Klenk H.-P."/>
            <person name="Gunsalus R.P."/>
            <person name="Fritz H.-J."/>
            <person name="Gottschalk G."/>
        </authorList>
    </citation>
    <scope>NUCLEOTIDE SEQUENCE [LARGE SCALE GENOMIC DNA]</scope>
    <source>
        <strain>ATCC BAA-159 / DSM 3647 / Goe1 / Go1 / JCM 11833 / OCM 88</strain>
    </source>
</reference>
<reference key="2">
    <citation type="journal article" date="2005" name="Mol. Microbiol.">
        <title>Unique mechanistic features of post-translational regulation of glutamine synthetase activity in Methanosarcina mazei strain Goe1 in response to nitrogen availability.</title>
        <authorList>
            <person name="Ehlers C."/>
            <person name="Weidenbach K."/>
            <person name="Veit K."/>
            <person name="Forchhammer K."/>
            <person name="Schmitz R.A."/>
        </authorList>
    </citation>
    <scope>FUNCTION</scope>
    <scope>CATALYTIC ACTIVITY</scope>
    <scope>ACTIVITY REGULATION</scope>
    <scope>SUBUNIT</scope>
    <scope>INTERACTION WITH GLNK1</scope>
    <source>
        <strain>ATCC BAA-159 / DSM 3647 / Goe1 / Go1 / JCM 11833 / OCM 88</strain>
    </source>
</reference>
<feature type="chain" id="PRO_0000453011" description="Glutamine synthetase">
    <location>
        <begin position="1"/>
        <end position="447"/>
    </location>
</feature>
<feature type="domain" description="GS beta-grasp" evidence="5">
    <location>
        <begin position="20"/>
        <end position="105"/>
    </location>
</feature>
<feature type="domain" description="GS catalytic" evidence="6">
    <location>
        <begin position="112"/>
        <end position="447"/>
    </location>
</feature>
<feature type="binding site" evidence="2">
    <location>
        <position position="135"/>
    </location>
    <ligand>
        <name>Mg(2+)</name>
        <dbReference type="ChEBI" id="CHEBI:18420"/>
        <label>1</label>
    </ligand>
</feature>
<feature type="binding site" evidence="2">
    <location>
        <position position="137"/>
    </location>
    <ligand>
        <name>Mg(2+)</name>
        <dbReference type="ChEBI" id="CHEBI:18420"/>
        <label>2</label>
    </ligand>
</feature>
<feature type="binding site" evidence="4">
    <location>
        <position position="187"/>
    </location>
    <ligand>
        <name>ATP</name>
        <dbReference type="ChEBI" id="CHEBI:30616"/>
    </ligand>
</feature>
<feature type="binding site" evidence="2">
    <location>
        <position position="192"/>
    </location>
    <ligand>
        <name>Mg(2+)</name>
        <dbReference type="ChEBI" id="CHEBI:18420"/>
        <label>2</label>
    </ligand>
</feature>
<feature type="binding site" evidence="2">
    <location>
        <position position="199"/>
    </location>
    <ligand>
        <name>Mg(2+)</name>
        <dbReference type="ChEBI" id="CHEBI:18420"/>
        <label>2</label>
    </ligand>
</feature>
<feature type="binding site" evidence="4">
    <location>
        <begin position="243"/>
        <end position="244"/>
    </location>
    <ligand>
        <name>L-glutamate</name>
        <dbReference type="ChEBI" id="CHEBI:29985"/>
    </ligand>
</feature>
<feature type="binding site" evidence="2">
    <location>
        <position position="244"/>
    </location>
    <ligand>
        <name>L-glutamate</name>
        <dbReference type="ChEBI" id="CHEBI:29985"/>
    </ligand>
</feature>
<feature type="binding site" evidence="2">
    <location>
        <position position="248"/>
    </location>
    <ligand>
        <name>Mg(2+)</name>
        <dbReference type="ChEBI" id="CHEBI:18420"/>
        <label>1</label>
    </ligand>
</feature>
<feature type="binding site" evidence="3">
    <location>
        <position position="252"/>
    </location>
    <ligand>
        <name>ATP</name>
        <dbReference type="ChEBI" id="CHEBI:30616"/>
    </ligand>
</feature>
<feature type="binding site" evidence="1">
    <location>
        <position position="301"/>
    </location>
    <ligand>
        <name>L-glutamate</name>
        <dbReference type="ChEBI" id="CHEBI:29985"/>
    </ligand>
</feature>
<feature type="binding site" evidence="1">
    <location>
        <position position="307"/>
    </location>
    <ligand>
        <name>L-glutamate</name>
        <dbReference type="ChEBI" id="CHEBI:29985"/>
    </ligand>
</feature>
<feature type="binding site" evidence="4">
    <location>
        <position position="319"/>
    </location>
    <ligand>
        <name>ATP</name>
        <dbReference type="ChEBI" id="CHEBI:30616"/>
    </ligand>
</feature>
<feature type="binding site" evidence="4">
    <location>
        <position position="319"/>
    </location>
    <ligand>
        <name>L-glutamate</name>
        <dbReference type="ChEBI" id="CHEBI:29985"/>
    </ligand>
</feature>
<feature type="binding site" evidence="4">
    <location>
        <position position="324"/>
    </location>
    <ligand>
        <name>ATP</name>
        <dbReference type="ChEBI" id="CHEBI:30616"/>
    </ligand>
</feature>
<feature type="binding site" evidence="2">
    <location>
        <position position="336"/>
    </location>
    <ligand>
        <name>Mg(2+)</name>
        <dbReference type="ChEBI" id="CHEBI:18420"/>
        <label>1</label>
    </ligand>
</feature>
<feature type="binding site" evidence="1">
    <location>
        <position position="338"/>
    </location>
    <ligand>
        <name>L-glutamate</name>
        <dbReference type="ChEBI" id="CHEBI:29985"/>
    </ligand>
</feature>
<comment type="function">
    <text evidence="7">Probably involved in nitrogen metabolism via ammonium assimilation. Catalyzes the ATP-dependent biosynthesis of glutamine from glutamate and ammonia.</text>
</comment>
<comment type="catalytic activity">
    <reaction evidence="7">
        <text>L-glutamate + NH4(+) + ATP = L-glutamine + ADP + phosphate + H(+)</text>
        <dbReference type="Rhea" id="RHEA:16169"/>
        <dbReference type="ChEBI" id="CHEBI:15378"/>
        <dbReference type="ChEBI" id="CHEBI:28938"/>
        <dbReference type="ChEBI" id="CHEBI:29985"/>
        <dbReference type="ChEBI" id="CHEBI:30616"/>
        <dbReference type="ChEBI" id="CHEBI:43474"/>
        <dbReference type="ChEBI" id="CHEBI:58359"/>
        <dbReference type="ChEBI" id="CHEBI:456216"/>
        <dbReference type="EC" id="6.3.1.2"/>
    </reaction>
</comment>
<comment type="cofactor">
    <cofactor evidence="2">
        <name>Mg(2+)</name>
        <dbReference type="ChEBI" id="CHEBI:18420"/>
    </cofactor>
    <text evidence="2">Binds 2 Mg(2+) ions per subunit.</text>
</comment>
<comment type="activity regulation">
    <text evidence="7">Directly stimulated by the effector molecule 2-oxoglutarate. Inhibited by GlnK1. 2-oxoglutarate antagonizes the inhibitory effects of GlnK1, but does not prevent GlnK1/GlnA1 complex formation.</text>
</comment>
<comment type="subunit">
    <text evidence="7">Homohexamer. Interacts and forms stable complexes with the regulatory protein GlnK1.</text>
</comment>
<comment type="subcellular location">
    <subcellularLocation>
        <location evidence="2">Cytoplasm</location>
    </subcellularLocation>
</comment>
<comment type="similarity">
    <text evidence="9">Belongs to the glutamine synthetase family.</text>
</comment>
<protein>
    <recommendedName>
        <fullName evidence="8">Glutamine synthetase</fullName>
        <shortName evidence="2">GS</shortName>
        <ecNumber evidence="7">6.3.1.2</ecNumber>
    </recommendedName>
    <alternativeName>
        <fullName evidence="2">Glutamate--ammonia ligase</fullName>
    </alternativeName>
</protein>
<sequence length="447" mass="50593">MVQMKKCTTKEDVLEAVKERDVKFIRTQFTDTLGIIKSWAIPAEQLEEAFENGVMFDGSSIQGFTRIEESDMKLALDPSTFRILPWRPATGAVARILGDVYLPDGNPFKGDPRYVLKTAIKEAEKMGFSMNVGPELEFFLFKLDANGNPTTELTDQGGYFDFAPLDRAQDVRRDIDYALEHMGFQIEASHHEVAPSQHEIDFRFGDVLCTADNVVTFKYVVKSIAYHKGYYASFMPKPLFGVNGSGMHSNQSLFKDGKNVFYDPDTPTKLSQDAMYYIGGLLKHIREFTAVTNPVVNSYKRLVPGYEAPVYISWSAQNRSSLIRIPATRGNGTRIELRCPDPACNPYLAFALMLRAGLEGIKNKIDPGEPTNVNIFHLSDKEREERGIRSLPADLKEAIDEMKGSKFVKEALGEHVFSHYLCAKEMEWDEYKAVVHPWELSRYLSML</sequence>